<dbReference type="EMBL" id="CP001341">
    <property type="protein sequence ID" value="ACL39470.1"/>
    <property type="molecule type" value="Genomic_DNA"/>
</dbReference>
<dbReference type="RefSeq" id="WP_009358635.1">
    <property type="nucleotide sequence ID" value="NC_011886.1"/>
</dbReference>
<dbReference type="SMR" id="B8HGA8"/>
<dbReference type="STRING" id="452863.Achl_1481"/>
<dbReference type="GeneID" id="97421124"/>
<dbReference type="KEGG" id="ach:Achl_1481"/>
<dbReference type="eggNOG" id="COG0291">
    <property type="taxonomic scope" value="Bacteria"/>
</dbReference>
<dbReference type="HOGENOM" id="CLU_169643_4_2_11"/>
<dbReference type="OrthoDB" id="9804851at2"/>
<dbReference type="Proteomes" id="UP000002505">
    <property type="component" value="Chromosome"/>
</dbReference>
<dbReference type="GO" id="GO:0022625">
    <property type="term" value="C:cytosolic large ribosomal subunit"/>
    <property type="evidence" value="ECO:0007669"/>
    <property type="project" value="TreeGrafter"/>
</dbReference>
<dbReference type="GO" id="GO:0003735">
    <property type="term" value="F:structural constituent of ribosome"/>
    <property type="evidence" value="ECO:0007669"/>
    <property type="project" value="InterPro"/>
</dbReference>
<dbReference type="GO" id="GO:0006412">
    <property type="term" value="P:translation"/>
    <property type="evidence" value="ECO:0007669"/>
    <property type="project" value="UniProtKB-UniRule"/>
</dbReference>
<dbReference type="FunFam" id="4.10.410.60:FF:000001">
    <property type="entry name" value="50S ribosomal protein L35"/>
    <property type="match status" value="1"/>
</dbReference>
<dbReference type="Gene3D" id="4.10.410.60">
    <property type="match status" value="1"/>
</dbReference>
<dbReference type="HAMAP" id="MF_00514">
    <property type="entry name" value="Ribosomal_bL35"/>
    <property type="match status" value="1"/>
</dbReference>
<dbReference type="InterPro" id="IPR001706">
    <property type="entry name" value="Ribosomal_bL35"/>
</dbReference>
<dbReference type="InterPro" id="IPR021137">
    <property type="entry name" value="Ribosomal_bL35-like"/>
</dbReference>
<dbReference type="InterPro" id="IPR018265">
    <property type="entry name" value="Ribosomal_bL35_CS"/>
</dbReference>
<dbReference type="InterPro" id="IPR037229">
    <property type="entry name" value="Ribosomal_bL35_sf"/>
</dbReference>
<dbReference type="NCBIfam" id="TIGR00001">
    <property type="entry name" value="rpmI_bact"/>
    <property type="match status" value="1"/>
</dbReference>
<dbReference type="PANTHER" id="PTHR33343">
    <property type="entry name" value="54S RIBOSOMAL PROTEIN BL35M"/>
    <property type="match status" value="1"/>
</dbReference>
<dbReference type="PANTHER" id="PTHR33343:SF1">
    <property type="entry name" value="LARGE RIBOSOMAL SUBUNIT PROTEIN BL35M"/>
    <property type="match status" value="1"/>
</dbReference>
<dbReference type="Pfam" id="PF01632">
    <property type="entry name" value="Ribosomal_L35p"/>
    <property type="match status" value="1"/>
</dbReference>
<dbReference type="PRINTS" id="PR00064">
    <property type="entry name" value="RIBOSOMALL35"/>
</dbReference>
<dbReference type="SUPFAM" id="SSF143034">
    <property type="entry name" value="L35p-like"/>
    <property type="match status" value="1"/>
</dbReference>
<dbReference type="PROSITE" id="PS00936">
    <property type="entry name" value="RIBOSOMAL_L35"/>
    <property type="match status" value="1"/>
</dbReference>
<proteinExistence type="inferred from homology"/>
<sequence>MPKMKTHSGAKKRFKLTGSGKLRRQQANRRHYLEHKSSRLTRRLAGDKIVFKGDAKVIRKMLGI</sequence>
<name>RL35_PSECP</name>
<keyword id="KW-0687">Ribonucleoprotein</keyword>
<keyword id="KW-0689">Ribosomal protein</keyword>
<comment type="similarity">
    <text evidence="1">Belongs to the bacterial ribosomal protein bL35 family.</text>
</comment>
<organism>
    <name type="scientific">Pseudarthrobacter chlorophenolicus (strain ATCC 700700 / DSM 12829 / CIP 107037 / JCM 12360 / KCTC 9906 / NCIMB 13794 / A6)</name>
    <name type="common">Arthrobacter chlorophenolicus</name>
    <dbReference type="NCBI Taxonomy" id="452863"/>
    <lineage>
        <taxon>Bacteria</taxon>
        <taxon>Bacillati</taxon>
        <taxon>Actinomycetota</taxon>
        <taxon>Actinomycetes</taxon>
        <taxon>Micrococcales</taxon>
        <taxon>Micrococcaceae</taxon>
        <taxon>Pseudarthrobacter</taxon>
    </lineage>
</organism>
<gene>
    <name evidence="1" type="primary">rpmI</name>
    <name type="ordered locus">Achl_1481</name>
</gene>
<accession>B8HGA8</accession>
<evidence type="ECO:0000255" key="1">
    <source>
        <dbReference type="HAMAP-Rule" id="MF_00514"/>
    </source>
</evidence>
<evidence type="ECO:0000256" key="2">
    <source>
        <dbReference type="SAM" id="MobiDB-lite"/>
    </source>
</evidence>
<evidence type="ECO:0000305" key="3"/>
<feature type="chain" id="PRO_1000146117" description="Large ribosomal subunit protein bL35">
    <location>
        <begin position="1"/>
        <end position="64"/>
    </location>
</feature>
<feature type="region of interest" description="Disordered" evidence="2">
    <location>
        <begin position="1"/>
        <end position="29"/>
    </location>
</feature>
<protein>
    <recommendedName>
        <fullName evidence="1">Large ribosomal subunit protein bL35</fullName>
    </recommendedName>
    <alternativeName>
        <fullName evidence="3">50S ribosomal protein L35</fullName>
    </alternativeName>
</protein>
<reference key="1">
    <citation type="submission" date="2009-01" db="EMBL/GenBank/DDBJ databases">
        <title>Complete sequence of chromosome of Arthrobacter chlorophenolicus A6.</title>
        <authorList>
            <consortium name="US DOE Joint Genome Institute"/>
            <person name="Lucas S."/>
            <person name="Copeland A."/>
            <person name="Lapidus A."/>
            <person name="Glavina del Rio T."/>
            <person name="Tice H."/>
            <person name="Bruce D."/>
            <person name="Goodwin L."/>
            <person name="Pitluck S."/>
            <person name="Goltsman E."/>
            <person name="Clum A."/>
            <person name="Larimer F."/>
            <person name="Land M."/>
            <person name="Hauser L."/>
            <person name="Kyrpides N."/>
            <person name="Mikhailova N."/>
            <person name="Jansson J."/>
            <person name="Richardson P."/>
        </authorList>
    </citation>
    <scope>NUCLEOTIDE SEQUENCE [LARGE SCALE GENOMIC DNA]</scope>
    <source>
        <strain>ATCC 700700 / DSM 12829 / CIP 107037 / JCM 12360 / KCTC 9906 / NCIMB 13794 / A6</strain>
    </source>
</reference>